<evidence type="ECO:0000255" key="1">
    <source>
        <dbReference type="HAMAP-Rule" id="MF_01393"/>
    </source>
</evidence>
<dbReference type="EMBL" id="DQ069376">
    <property type="protein sequence ID" value="AAZ03820.1"/>
    <property type="molecule type" value="Genomic_DNA"/>
</dbReference>
<dbReference type="EMBL" id="DQ359689">
    <property type="protein sequence ID" value="ABC70744.1"/>
    <property type="molecule type" value="Genomic_DNA"/>
</dbReference>
<dbReference type="RefSeq" id="YP_001004174.1">
    <property type="nucleotide sequence ID" value="NC_008796.1"/>
</dbReference>
<dbReference type="SMR" id="Q4FGF5"/>
<dbReference type="GeneID" id="4712143"/>
<dbReference type="GO" id="GO:0009535">
    <property type="term" value="C:chloroplast thylakoid membrane"/>
    <property type="evidence" value="ECO:0007669"/>
    <property type="project" value="UniProtKB-SubCell"/>
</dbReference>
<dbReference type="GO" id="GO:0005886">
    <property type="term" value="C:plasma membrane"/>
    <property type="evidence" value="ECO:0007669"/>
    <property type="project" value="UniProtKB-UniRule"/>
</dbReference>
<dbReference type="GO" id="GO:0045259">
    <property type="term" value="C:proton-transporting ATP synthase complex"/>
    <property type="evidence" value="ECO:0007669"/>
    <property type="project" value="UniProtKB-KW"/>
</dbReference>
<dbReference type="GO" id="GO:0046933">
    <property type="term" value="F:proton-transporting ATP synthase activity, rotational mechanism"/>
    <property type="evidence" value="ECO:0007669"/>
    <property type="project" value="UniProtKB-UniRule"/>
</dbReference>
<dbReference type="CDD" id="cd00310">
    <property type="entry name" value="ATP-synt_Fo_a_6"/>
    <property type="match status" value="1"/>
</dbReference>
<dbReference type="FunFam" id="1.20.120.220:FF:000001">
    <property type="entry name" value="ATP synthase subunit a, chloroplastic"/>
    <property type="match status" value="1"/>
</dbReference>
<dbReference type="Gene3D" id="1.20.120.220">
    <property type="entry name" value="ATP synthase, F0 complex, subunit A"/>
    <property type="match status" value="1"/>
</dbReference>
<dbReference type="HAMAP" id="MF_01393">
    <property type="entry name" value="ATP_synth_a_bact"/>
    <property type="match status" value="1"/>
</dbReference>
<dbReference type="InterPro" id="IPR045082">
    <property type="entry name" value="ATP_syn_F0_a_bact/chloroplast"/>
</dbReference>
<dbReference type="InterPro" id="IPR000568">
    <property type="entry name" value="ATP_synth_F0_asu"/>
</dbReference>
<dbReference type="InterPro" id="IPR023011">
    <property type="entry name" value="ATP_synth_F0_asu_AS"/>
</dbReference>
<dbReference type="InterPro" id="IPR035908">
    <property type="entry name" value="F0_ATP_A_sf"/>
</dbReference>
<dbReference type="NCBIfam" id="TIGR01131">
    <property type="entry name" value="ATP_synt_6_or_A"/>
    <property type="match status" value="1"/>
</dbReference>
<dbReference type="PANTHER" id="PTHR42823">
    <property type="entry name" value="ATP SYNTHASE SUBUNIT A, CHLOROPLASTIC"/>
    <property type="match status" value="1"/>
</dbReference>
<dbReference type="PANTHER" id="PTHR42823:SF3">
    <property type="entry name" value="ATP SYNTHASE SUBUNIT A, CHLOROPLASTIC"/>
    <property type="match status" value="1"/>
</dbReference>
<dbReference type="Pfam" id="PF00119">
    <property type="entry name" value="ATP-synt_A"/>
    <property type="match status" value="1"/>
</dbReference>
<dbReference type="PRINTS" id="PR00123">
    <property type="entry name" value="ATPASEA"/>
</dbReference>
<dbReference type="SUPFAM" id="SSF81336">
    <property type="entry name" value="F1F0 ATP synthase subunit A"/>
    <property type="match status" value="1"/>
</dbReference>
<dbReference type="PROSITE" id="PS00449">
    <property type="entry name" value="ATPASE_A"/>
    <property type="match status" value="1"/>
</dbReference>
<geneLocation type="chloroplast"/>
<sequence length="247" mass="27137">MNVLPCSVNTLKGLYDISGVEVGQHFYWQIGGFQVHAQVLITSWFVIAILLGSAIIAVRNPQTIPTDGQNFFEYVLEFIRDLSKTQIGEEYGPWVPFIGTMFLFIFVSNWSGALLPWKIIQLPHGELAAPTNDINTTVALALPTSVAYFYAGLTKKGLGYFGKYIQPTPILLPINILEDFTKPLSLSFRLFGNILADELVVVVLVSLVPSVVPIPVMFLGLFTSGIQALIFATLAAAYIGESMEGHH</sequence>
<gene>
    <name evidence="1" type="primary">atpI</name>
</gene>
<keyword id="KW-0066">ATP synthesis</keyword>
<keyword id="KW-0138">CF(0)</keyword>
<keyword id="KW-0150">Chloroplast</keyword>
<keyword id="KW-0375">Hydrogen ion transport</keyword>
<keyword id="KW-0406">Ion transport</keyword>
<keyword id="KW-0472">Membrane</keyword>
<keyword id="KW-0934">Plastid</keyword>
<keyword id="KW-0793">Thylakoid</keyword>
<keyword id="KW-0812">Transmembrane</keyword>
<keyword id="KW-1133">Transmembrane helix</keyword>
<keyword id="KW-0813">Transport</keyword>
<protein>
    <recommendedName>
        <fullName evidence="1">ATP synthase subunit a, chloroplastic</fullName>
    </recommendedName>
    <alternativeName>
        <fullName evidence="1">ATP synthase F0 sector subunit a</fullName>
    </alternativeName>
    <alternativeName>
        <fullName evidence="1">F-ATPase subunit IV</fullName>
    </alternativeName>
</protein>
<accession>Q4FGF5</accession>
<organism>
    <name type="scientific">Ranunculus macranthus</name>
    <name type="common">Large buttercup</name>
    <dbReference type="NCBI Taxonomy" id="334596"/>
    <lineage>
        <taxon>Eukaryota</taxon>
        <taxon>Viridiplantae</taxon>
        <taxon>Streptophyta</taxon>
        <taxon>Embryophyta</taxon>
        <taxon>Tracheophyta</taxon>
        <taxon>Spermatophyta</taxon>
        <taxon>Magnoliopsida</taxon>
        <taxon>Ranunculales</taxon>
        <taxon>Ranunculaceae</taxon>
        <taxon>Ranunculoideae</taxon>
        <taxon>Ranunculeae</taxon>
        <taxon>Ranunculus</taxon>
    </lineage>
</organism>
<reference key="1">
    <citation type="journal article" date="2005" name="Mol. Biol. Evol.">
        <title>Identifying the basal angiosperm node in chloroplast genome phylogenies: sampling one's way out of the Felsenstein zone.</title>
        <authorList>
            <person name="Leebens-Mack J."/>
            <person name="Raubeson L.A."/>
            <person name="Cui L."/>
            <person name="Kuehl J.V."/>
            <person name="Fourcade M.H."/>
            <person name="Chumley T.W."/>
            <person name="Boore J.L."/>
            <person name="Jansen R.K."/>
            <person name="dePamphilis C.W."/>
        </authorList>
    </citation>
    <scope>NUCLEOTIDE SEQUENCE [GENOMIC DNA]</scope>
</reference>
<reference key="2">
    <citation type="journal article" date="2007" name="BMC Genomics">
        <title>Comparative chloroplast genomics: analyses including new sequences from the angiosperms Nuphar advena and Ranunculus macranthus.</title>
        <authorList>
            <person name="Raubeson L.A."/>
            <person name="Peery R."/>
            <person name="Chumley T.W."/>
            <person name="Dziubek C."/>
            <person name="Fourcade H.M."/>
            <person name="Boore J.L."/>
            <person name="Jansen R.K."/>
        </authorList>
    </citation>
    <scope>NUCLEOTIDE SEQUENCE [LARGE SCALE GENOMIC DNA]</scope>
</reference>
<feature type="chain" id="PRO_0000362597" description="ATP synthase subunit a, chloroplastic">
    <location>
        <begin position="1"/>
        <end position="247"/>
    </location>
</feature>
<feature type="transmembrane region" description="Helical" evidence="1">
    <location>
        <begin position="38"/>
        <end position="58"/>
    </location>
</feature>
<feature type="transmembrane region" description="Helical" evidence="1">
    <location>
        <begin position="95"/>
        <end position="115"/>
    </location>
</feature>
<feature type="transmembrane region" description="Helical" evidence="1">
    <location>
        <begin position="134"/>
        <end position="154"/>
    </location>
</feature>
<feature type="transmembrane region" description="Helical" evidence="1">
    <location>
        <begin position="199"/>
        <end position="219"/>
    </location>
</feature>
<feature type="transmembrane region" description="Helical" evidence="1">
    <location>
        <begin position="220"/>
        <end position="240"/>
    </location>
</feature>
<name>ATPI_RANMC</name>
<proteinExistence type="inferred from homology"/>
<comment type="function">
    <text evidence="1">Key component of the proton channel; it plays a direct role in the translocation of protons across the membrane.</text>
</comment>
<comment type="subunit">
    <text evidence="1">F-type ATPases have 2 components, CF(1) - the catalytic core - and CF(0) - the membrane proton channel. CF(1) has five subunits: alpha(3), beta(3), gamma(1), delta(1), epsilon(1). CF(0) has four main subunits: a, b, b' and c.</text>
</comment>
<comment type="subcellular location">
    <subcellularLocation>
        <location evidence="1">Plastid</location>
        <location evidence="1">Chloroplast thylakoid membrane</location>
        <topology evidence="1">Multi-pass membrane protein</topology>
    </subcellularLocation>
</comment>
<comment type="similarity">
    <text evidence="1">Belongs to the ATPase A chain family.</text>
</comment>